<keyword id="KW-1185">Reference proteome</keyword>
<name>Y802_TREPA</name>
<sequence length="109" mass="12262">MQHAPTQSQDTPCTRQGCSPFIYARRAGTPLRAARTAKTMQPRETSSCKRKTQYNLGSVTSGAHTITPAHAKLPLAQRYCKFTRVTREQHYPENNWENGLICRTPADTL</sequence>
<accession>O83780</accession>
<gene>
    <name type="ordered locus">TP_0802</name>
</gene>
<reference key="1">
    <citation type="journal article" date="1998" name="Science">
        <title>Complete genome sequence of Treponema pallidum, the syphilis spirochete.</title>
        <authorList>
            <person name="Fraser C.M."/>
            <person name="Norris S.J."/>
            <person name="Weinstock G.M."/>
            <person name="White O."/>
            <person name="Sutton G.G."/>
            <person name="Dodson R.J."/>
            <person name="Gwinn M.L."/>
            <person name="Hickey E.K."/>
            <person name="Clayton R.A."/>
            <person name="Ketchum K.A."/>
            <person name="Sodergren E."/>
            <person name="Hardham J.M."/>
            <person name="McLeod M.P."/>
            <person name="Salzberg S.L."/>
            <person name="Peterson J.D."/>
            <person name="Khalak H.G."/>
            <person name="Richardson D.L."/>
            <person name="Howell J.K."/>
            <person name="Chidambaram M."/>
            <person name="Utterback T.R."/>
            <person name="McDonald L.A."/>
            <person name="Artiach P."/>
            <person name="Bowman C."/>
            <person name="Cotton M.D."/>
            <person name="Fujii C."/>
            <person name="Garland S.A."/>
            <person name="Hatch B."/>
            <person name="Horst K."/>
            <person name="Roberts K.M."/>
            <person name="Sandusky M."/>
            <person name="Weidman J.F."/>
            <person name="Smith H.O."/>
            <person name="Venter J.C."/>
        </authorList>
    </citation>
    <scope>NUCLEOTIDE SEQUENCE [LARGE SCALE GENOMIC DNA]</scope>
    <source>
        <strain>Nichols</strain>
    </source>
</reference>
<proteinExistence type="predicted"/>
<organism>
    <name type="scientific">Treponema pallidum (strain Nichols)</name>
    <dbReference type="NCBI Taxonomy" id="243276"/>
    <lineage>
        <taxon>Bacteria</taxon>
        <taxon>Pseudomonadati</taxon>
        <taxon>Spirochaetota</taxon>
        <taxon>Spirochaetia</taxon>
        <taxon>Spirochaetales</taxon>
        <taxon>Treponemataceae</taxon>
        <taxon>Treponema</taxon>
    </lineage>
</organism>
<dbReference type="EMBL" id="AE000520">
    <property type="protein sequence ID" value="AAC65774.1"/>
    <property type="molecule type" value="Genomic_DNA"/>
</dbReference>
<dbReference type="PIR" id="D71279">
    <property type="entry name" value="D71279"/>
</dbReference>
<dbReference type="IntAct" id="O83780">
    <property type="interactions" value="17"/>
</dbReference>
<dbReference type="STRING" id="243276.TP_0802"/>
<dbReference type="EnsemblBacteria" id="AAC65774">
    <property type="protein sequence ID" value="AAC65774"/>
    <property type="gene ID" value="TP_0802"/>
</dbReference>
<dbReference type="KEGG" id="tpa:TP_0802"/>
<dbReference type="KEGG" id="tpw:TPANIC_0802"/>
<dbReference type="HOGENOM" id="CLU_2182798_0_0_12"/>
<dbReference type="Proteomes" id="UP000000811">
    <property type="component" value="Chromosome"/>
</dbReference>
<feature type="chain" id="PRO_0000202330" description="Uncharacterized protein TP_0802">
    <location>
        <begin position="1"/>
        <end position="109"/>
    </location>
</feature>
<protein>
    <recommendedName>
        <fullName>Uncharacterized protein TP_0802</fullName>
    </recommendedName>
</protein>